<name>EFG_MACCJ</name>
<sequence>MAREFSLKNTRNIGIMAHIDAGKTTTTERILYYTGRIHKIGETHEGASQMDWMEQEQERGITITSAATTAQWNGHRINIIDTPGHVDFTVEVERSLRVLDGAVTVLDAQSGVEPQTETVWRQATTYGVPRIVFINKMDKTGADFNYSVGTLHDRLQANAHPIQMPIGAEDQFNAIVDLVEMKLYTYTNDLGTDIEVTEVPEEHLADAEAMREQLIEAVADVNEDLMEKYLGGEEISVDELKAAIRQATCDVEFYPVLAGTAFKNKGVQLMLDAAIEYLPSPLDVKPIIGHAADDENEEIIAKPDDSAPFAALAFKVMTDPFVGKLTFFRVYSGTLNSGSYVQNATKGKRERVGRILQMHANSREEISTVYSGDIAAAVGLKDTTTGDTLCDEKNQVILESMEFPEPVIHLSVEPKSKADQDKMTNALVKLQEEDPTFHAHTDPETGQVIIGGMGELHLDILVDRMKREFKVEATVGAPMVSYRETFKKAAAVQGKFSRQSGGRGQYGDVHIEFSPNEVGGGFEFENAIVGGVIPREYIPSVEAGLRDAMENGVLAGYPLIDVKAKLFDGSYHDVDSSEMAFKVAASLALKEAAKKCDPVILEPMMKVEIVMPEEYMGDIMGDVTSRRGRVEGMEARGNAQVVRAFVPLAEMFGYATNLRSNTQGRGTYSMVFDHYEEVPKSIAEDIIKKNKGE</sequence>
<protein>
    <recommendedName>
        <fullName evidence="1">Elongation factor G</fullName>
        <shortName evidence="1">EF-G</shortName>
    </recommendedName>
</protein>
<organism>
    <name type="scientific">Macrococcus caseolyticus (strain JCSC5402)</name>
    <name type="common">Macrococcoides caseolyticum</name>
    <dbReference type="NCBI Taxonomy" id="458233"/>
    <lineage>
        <taxon>Bacteria</taxon>
        <taxon>Bacillati</taxon>
        <taxon>Bacillota</taxon>
        <taxon>Bacilli</taxon>
        <taxon>Bacillales</taxon>
        <taxon>Staphylococcaceae</taxon>
        <taxon>Macrococcoides</taxon>
    </lineage>
</organism>
<proteinExistence type="inferred from homology"/>
<reference key="1">
    <citation type="journal article" date="2009" name="J. Bacteriol.">
        <title>Complete genome sequence of Macrococcus caseolyticus strain JCSCS5402, reflecting the ancestral genome of the human-pathogenic staphylococci.</title>
        <authorList>
            <person name="Baba T."/>
            <person name="Kuwahara-Arai K."/>
            <person name="Uchiyama I."/>
            <person name="Takeuchi F."/>
            <person name="Ito T."/>
            <person name="Hiramatsu K."/>
        </authorList>
    </citation>
    <scope>NUCLEOTIDE SEQUENCE [LARGE SCALE GENOMIC DNA]</scope>
    <source>
        <strain>JCSC5402</strain>
    </source>
</reference>
<gene>
    <name evidence="1" type="primary">fusA</name>
    <name type="ordered locus">MCCL_1862</name>
</gene>
<accession>B9E8Q1</accession>
<comment type="function">
    <text evidence="1">Catalyzes the GTP-dependent ribosomal translocation step during translation elongation. During this step, the ribosome changes from the pre-translocational (PRE) to the post-translocational (POST) state as the newly formed A-site-bound peptidyl-tRNA and P-site-bound deacylated tRNA move to the P and E sites, respectively. Catalyzes the coordinated movement of the two tRNA molecules, the mRNA and conformational changes in the ribosome.</text>
</comment>
<comment type="subcellular location">
    <subcellularLocation>
        <location evidence="1">Cytoplasm</location>
    </subcellularLocation>
</comment>
<comment type="similarity">
    <text evidence="1">Belongs to the TRAFAC class translation factor GTPase superfamily. Classic translation factor GTPase family. EF-G/EF-2 subfamily.</text>
</comment>
<dbReference type="EMBL" id="AP009484">
    <property type="protein sequence ID" value="BAH18569.1"/>
    <property type="molecule type" value="Genomic_DNA"/>
</dbReference>
<dbReference type="RefSeq" id="WP_015912361.1">
    <property type="nucleotide sequence ID" value="NC_011999.1"/>
</dbReference>
<dbReference type="SMR" id="B9E8Q1"/>
<dbReference type="STRING" id="458233.MCCL_1862"/>
<dbReference type="KEGG" id="mcl:MCCL_1862"/>
<dbReference type="eggNOG" id="COG0480">
    <property type="taxonomic scope" value="Bacteria"/>
</dbReference>
<dbReference type="HOGENOM" id="CLU_002794_4_1_9"/>
<dbReference type="OrthoDB" id="9804431at2"/>
<dbReference type="Proteomes" id="UP000001383">
    <property type="component" value="Chromosome"/>
</dbReference>
<dbReference type="GO" id="GO:0005737">
    <property type="term" value="C:cytoplasm"/>
    <property type="evidence" value="ECO:0007669"/>
    <property type="project" value="UniProtKB-SubCell"/>
</dbReference>
<dbReference type="GO" id="GO:0005525">
    <property type="term" value="F:GTP binding"/>
    <property type="evidence" value="ECO:0007669"/>
    <property type="project" value="UniProtKB-UniRule"/>
</dbReference>
<dbReference type="GO" id="GO:0003924">
    <property type="term" value="F:GTPase activity"/>
    <property type="evidence" value="ECO:0007669"/>
    <property type="project" value="InterPro"/>
</dbReference>
<dbReference type="GO" id="GO:0003746">
    <property type="term" value="F:translation elongation factor activity"/>
    <property type="evidence" value="ECO:0007669"/>
    <property type="project" value="UniProtKB-UniRule"/>
</dbReference>
<dbReference type="GO" id="GO:0032790">
    <property type="term" value="P:ribosome disassembly"/>
    <property type="evidence" value="ECO:0007669"/>
    <property type="project" value="TreeGrafter"/>
</dbReference>
<dbReference type="CDD" id="cd01886">
    <property type="entry name" value="EF-G"/>
    <property type="match status" value="1"/>
</dbReference>
<dbReference type="CDD" id="cd16262">
    <property type="entry name" value="EFG_III"/>
    <property type="match status" value="1"/>
</dbReference>
<dbReference type="CDD" id="cd01434">
    <property type="entry name" value="EFG_mtEFG1_IV"/>
    <property type="match status" value="1"/>
</dbReference>
<dbReference type="CDD" id="cd03713">
    <property type="entry name" value="EFG_mtEFG_C"/>
    <property type="match status" value="1"/>
</dbReference>
<dbReference type="CDD" id="cd04088">
    <property type="entry name" value="EFG_mtEFG_II"/>
    <property type="match status" value="1"/>
</dbReference>
<dbReference type="FunFam" id="2.40.30.10:FF:000006">
    <property type="entry name" value="Elongation factor G"/>
    <property type="match status" value="1"/>
</dbReference>
<dbReference type="FunFam" id="3.30.230.10:FF:000003">
    <property type="entry name" value="Elongation factor G"/>
    <property type="match status" value="1"/>
</dbReference>
<dbReference type="FunFam" id="3.30.70.240:FF:000001">
    <property type="entry name" value="Elongation factor G"/>
    <property type="match status" value="1"/>
</dbReference>
<dbReference type="FunFam" id="3.30.70.870:FF:000001">
    <property type="entry name" value="Elongation factor G"/>
    <property type="match status" value="1"/>
</dbReference>
<dbReference type="FunFam" id="3.40.50.300:FF:000029">
    <property type="entry name" value="Elongation factor G"/>
    <property type="match status" value="1"/>
</dbReference>
<dbReference type="Gene3D" id="3.30.230.10">
    <property type="match status" value="1"/>
</dbReference>
<dbReference type="Gene3D" id="3.30.70.240">
    <property type="match status" value="1"/>
</dbReference>
<dbReference type="Gene3D" id="3.30.70.870">
    <property type="entry name" value="Elongation Factor G (Translational Gtpase), domain 3"/>
    <property type="match status" value="1"/>
</dbReference>
<dbReference type="Gene3D" id="3.40.50.300">
    <property type="entry name" value="P-loop containing nucleotide triphosphate hydrolases"/>
    <property type="match status" value="1"/>
</dbReference>
<dbReference type="Gene3D" id="2.40.30.10">
    <property type="entry name" value="Translation factors"/>
    <property type="match status" value="1"/>
</dbReference>
<dbReference type="HAMAP" id="MF_00054_B">
    <property type="entry name" value="EF_G_EF_2_B"/>
    <property type="match status" value="1"/>
</dbReference>
<dbReference type="InterPro" id="IPR041095">
    <property type="entry name" value="EFG_II"/>
</dbReference>
<dbReference type="InterPro" id="IPR009022">
    <property type="entry name" value="EFG_III"/>
</dbReference>
<dbReference type="InterPro" id="IPR035647">
    <property type="entry name" value="EFG_III/V"/>
</dbReference>
<dbReference type="InterPro" id="IPR047872">
    <property type="entry name" value="EFG_IV"/>
</dbReference>
<dbReference type="InterPro" id="IPR035649">
    <property type="entry name" value="EFG_V"/>
</dbReference>
<dbReference type="InterPro" id="IPR000640">
    <property type="entry name" value="EFG_V-like"/>
</dbReference>
<dbReference type="InterPro" id="IPR004161">
    <property type="entry name" value="EFTu-like_2"/>
</dbReference>
<dbReference type="InterPro" id="IPR031157">
    <property type="entry name" value="G_TR_CS"/>
</dbReference>
<dbReference type="InterPro" id="IPR027417">
    <property type="entry name" value="P-loop_NTPase"/>
</dbReference>
<dbReference type="InterPro" id="IPR020568">
    <property type="entry name" value="Ribosomal_Su5_D2-typ_SF"/>
</dbReference>
<dbReference type="InterPro" id="IPR014721">
    <property type="entry name" value="Ribsml_uS5_D2-typ_fold_subgr"/>
</dbReference>
<dbReference type="InterPro" id="IPR005225">
    <property type="entry name" value="Small_GTP-bd"/>
</dbReference>
<dbReference type="InterPro" id="IPR000795">
    <property type="entry name" value="T_Tr_GTP-bd_dom"/>
</dbReference>
<dbReference type="InterPro" id="IPR009000">
    <property type="entry name" value="Transl_B-barrel_sf"/>
</dbReference>
<dbReference type="InterPro" id="IPR004540">
    <property type="entry name" value="Transl_elong_EFG/EF2"/>
</dbReference>
<dbReference type="InterPro" id="IPR005517">
    <property type="entry name" value="Transl_elong_EFG/EF2_IV"/>
</dbReference>
<dbReference type="NCBIfam" id="TIGR00484">
    <property type="entry name" value="EF-G"/>
    <property type="match status" value="1"/>
</dbReference>
<dbReference type="NCBIfam" id="NF009379">
    <property type="entry name" value="PRK12740.1-3"/>
    <property type="match status" value="1"/>
</dbReference>
<dbReference type="NCBIfam" id="NF009381">
    <property type="entry name" value="PRK12740.1-5"/>
    <property type="match status" value="1"/>
</dbReference>
<dbReference type="NCBIfam" id="TIGR00231">
    <property type="entry name" value="small_GTP"/>
    <property type="match status" value="1"/>
</dbReference>
<dbReference type="PANTHER" id="PTHR43261:SF1">
    <property type="entry name" value="RIBOSOME-RELEASING FACTOR 2, MITOCHONDRIAL"/>
    <property type="match status" value="1"/>
</dbReference>
<dbReference type="PANTHER" id="PTHR43261">
    <property type="entry name" value="TRANSLATION ELONGATION FACTOR G-RELATED"/>
    <property type="match status" value="1"/>
</dbReference>
<dbReference type="Pfam" id="PF00679">
    <property type="entry name" value="EFG_C"/>
    <property type="match status" value="1"/>
</dbReference>
<dbReference type="Pfam" id="PF14492">
    <property type="entry name" value="EFG_III"/>
    <property type="match status" value="1"/>
</dbReference>
<dbReference type="Pfam" id="PF03764">
    <property type="entry name" value="EFG_IV"/>
    <property type="match status" value="1"/>
</dbReference>
<dbReference type="Pfam" id="PF00009">
    <property type="entry name" value="GTP_EFTU"/>
    <property type="match status" value="1"/>
</dbReference>
<dbReference type="Pfam" id="PF03144">
    <property type="entry name" value="GTP_EFTU_D2"/>
    <property type="match status" value="1"/>
</dbReference>
<dbReference type="PRINTS" id="PR00315">
    <property type="entry name" value="ELONGATNFCT"/>
</dbReference>
<dbReference type="SMART" id="SM00838">
    <property type="entry name" value="EFG_C"/>
    <property type="match status" value="1"/>
</dbReference>
<dbReference type="SMART" id="SM00889">
    <property type="entry name" value="EFG_IV"/>
    <property type="match status" value="1"/>
</dbReference>
<dbReference type="SUPFAM" id="SSF54980">
    <property type="entry name" value="EF-G C-terminal domain-like"/>
    <property type="match status" value="2"/>
</dbReference>
<dbReference type="SUPFAM" id="SSF52540">
    <property type="entry name" value="P-loop containing nucleoside triphosphate hydrolases"/>
    <property type="match status" value="1"/>
</dbReference>
<dbReference type="SUPFAM" id="SSF54211">
    <property type="entry name" value="Ribosomal protein S5 domain 2-like"/>
    <property type="match status" value="1"/>
</dbReference>
<dbReference type="SUPFAM" id="SSF50447">
    <property type="entry name" value="Translation proteins"/>
    <property type="match status" value="1"/>
</dbReference>
<dbReference type="PROSITE" id="PS00301">
    <property type="entry name" value="G_TR_1"/>
    <property type="match status" value="1"/>
</dbReference>
<dbReference type="PROSITE" id="PS51722">
    <property type="entry name" value="G_TR_2"/>
    <property type="match status" value="1"/>
</dbReference>
<keyword id="KW-0963">Cytoplasm</keyword>
<keyword id="KW-0251">Elongation factor</keyword>
<keyword id="KW-0342">GTP-binding</keyword>
<keyword id="KW-0547">Nucleotide-binding</keyword>
<keyword id="KW-0648">Protein biosynthesis</keyword>
<keyword id="KW-1185">Reference proteome</keyword>
<feature type="chain" id="PRO_1000201472" description="Elongation factor G">
    <location>
        <begin position="1"/>
        <end position="693"/>
    </location>
</feature>
<feature type="domain" description="tr-type G">
    <location>
        <begin position="8"/>
        <end position="282"/>
    </location>
</feature>
<feature type="binding site" evidence="1">
    <location>
        <begin position="17"/>
        <end position="24"/>
    </location>
    <ligand>
        <name>GTP</name>
        <dbReference type="ChEBI" id="CHEBI:37565"/>
    </ligand>
</feature>
<feature type="binding site" evidence="1">
    <location>
        <begin position="81"/>
        <end position="85"/>
    </location>
    <ligand>
        <name>GTP</name>
        <dbReference type="ChEBI" id="CHEBI:37565"/>
    </ligand>
</feature>
<feature type="binding site" evidence="1">
    <location>
        <begin position="135"/>
        <end position="138"/>
    </location>
    <ligand>
        <name>GTP</name>
        <dbReference type="ChEBI" id="CHEBI:37565"/>
    </ligand>
</feature>
<evidence type="ECO:0000255" key="1">
    <source>
        <dbReference type="HAMAP-Rule" id="MF_00054"/>
    </source>
</evidence>